<comment type="function">
    <text evidence="2">Activates KDO (a required 8-carbon sugar) for incorporation into bacterial lipopolysaccharide in Gram-negative bacteria.</text>
</comment>
<comment type="catalytic activity">
    <reaction evidence="2">
        <text>3-deoxy-alpha-D-manno-oct-2-ulosonate + CTP = CMP-3-deoxy-beta-D-manno-octulosonate + diphosphate</text>
        <dbReference type="Rhea" id="RHEA:23448"/>
        <dbReference type="ChEBI" id="CHEBI:33019"/>
        <dbReference type="ChEBI" id="CHEBI:37563"/>
        <dbReference type="ChEBI" id="CHEBI:85986"/>
        <dbReference type="ChEBI" id="CHEBI:85987"/>
        <dbReference type="EC" id="2.7.7.38"/>
    </reaction>
</comment>
<comment type="pathway">
    <text evidence="2">Nucleotide-sugar biosynthesis; CMP-3-deoxy-D-manno-octulosonate biosynthesis; CMP-3-deoxy-D-manno-octulosonate from 3-deoxy-D-manno-octulosonate and CTP: step 1/1.</text>
</comment>
<comment type="pathway">
    <text evidence="2">Bacterial outer membrane biogenesis; lipopolysaccharide biosynthesis.</text>
</comment>
<comment type="subcellular location">
    <subcellularLocation>
        <location evidence="2">Cytoplasm</location>
    </subcellularLocation>
</comment>
<comment type="similarity">
    <text evidence="2">Belongs to the KdsB family.</text>
</comment>
<evidence type="ECO:0000250" key="1"/>
<evidence type="ECO:0000255" key="2">
    <source>
        <dbReference type="HAMAP-Rule" id="MF_00057"/>
    </source>
</evidence>
<evidence type="ECO:0007829" key="3">
    <source>
        <dbReference type="PDB" id="1VH3"/>
    </source>
</evidence>
<evidence type="ECO:0007829" key="4">
    <source>
        <dbReference type="PDB" id="1VIC"/>
    </source>
</evidence>
<proteinExistence type="evidence at protein level"/>
<dbReference type="EC" id="2.7.7.38" evidence="2"/>
<dbReference type="EMBL" id="L42023">
    <property type="protein sequence ID" value="AAC21736.1"/>
    <property type="molecule type" value="Genomic_DNA"/>
</dbReference>
<dbReference type="PIR" id="G64045">
    <property type="entry name" value="G64045"/>
</dbReference>
<dbReference type="RefSeq" id="NP_438231.1">
    <property type="nucleotide sequence ID" value="NC_000907.1"/>
</dbReference>
<dbReference type="PDB" id="1VH3">
    <property type="method" value="X-ray"/>
    <property type="resolution" value="2.70 A"/>
    <property type="chains" value="A/B/C=2-254"/>
</dbReference>
<dbReference type="PDB" id="1VIC">
    <property type="method" value="X-ray"/>
    <property type="resolution" value="1.80 A"/>
    <property type="chains" value="A/B=2-254"/>
</dbReference>
<dbReference type="PDB" id="3DUV">
    <property type="method" value="X-ray"/>
    <property type="resolution" value="2.30 A"/>
    <property type="chains" value="A/B=1-254"/>
</dbReference>
<dbReference type="PDBsum" id="1VH3"/>
<dbReference type="PDBsum" id="1VIC"/>
<dbReference type="PDBsum" id="3DUV"/>
<dbReference type="SMR" id="P44490"/>
<dbReference type="STRING" id="71421.HI_0058"/>
<dbReference type="DrugBank" id="DB04482">
    <property type="generic name" value="Cmp-2-Keto-3-Deoxy-Octulosonic Acid"/>
</dbReference>
<dbReference type="EnsemblBacteria" id="AAC21736">
    <property type="protein sequence ID" value="AAC21736"/>
    <property type="gene ID" value="HI_0058"/>
</dbReference>
<dbReference type="KEGG" id="hin:HI_0058"/>
<dbReference type="PATRIC" id="fig|71421.8.peg.58"/>
<dbReference type="eggNOG" id="COG1212">
    <property type="taxonomic scope" value="Bacteria"/>
</dbReference>
<dbReference type="HOGENOM" id="CLU_065038_1_0_6"/>
<dbReference type="OrthoDB" id="9815559at2"/>
<dbReference type="PhylomeDB" id="P44490"/>
<dbReference type="BioCyc" id="HINF71421:G1GJ1-59-MONOMER"/>
<dbReference type="BRENDA" id="2.7.7.38">
    <property type="organism ID" value="2529"/>
</dbReference>
<dbReference type="UniPathway" id="UPA00030"/>
<dbReference type="UniPathway" id="UPA00358">
    <property type="reaction ID" value="UER00476"/>
</dbReference>
<dbReference type="EvolutionaryTrace" id="P44490"/>
<dbReference type="Proteomes" id="UP000000579">
    <property type="component" value="Chromosome"/>
</dbReference>
<dbReference type="GO" id="GO:0005829">
    <property type="term" value="C:cytosol"/>
    <property type="evidence" value="ECO:0000318"/>
    <property type="project" value="GO_Central"/>
</dbReference>
<dbReference type="GO" id="GO:0008690">
    <property type="term" value="F:3-deoxy-manno-octulosonate cytidylyltransferase activity"/>
    <property type="evidence" value="ECO:0000318"/>
    <property type="project" value="GO_Central"/>
</dbReference>
<dbReference type="GO" id="GO:0033468">
    <property type="term" value="P:CMP-keto-3-deoxy-D-manno-octulosonic acid biosynthetic process"/>
    <property type="evidence" value="ECO:0007669"/>
    <property type="project" value="UniProtKB-UniRule"/>
</dbReference>
<dbReference type="GO" id="GO:0009103">
    <property type="term" value="P:lipopolysaccharide biosynthetic process"/>
    <property type="evidence" value="ECO:0007669"/>
    <property type="project" value="UniProtKB-UniRule"/>
</dbReference>
<dbReference type="CDD" id="cd02517">
    <property type="entry name" value="CMP-KDO-Synthetase"/>
    <property type="match status" value="1"/>
</dbReference>
<dbReference type="FunFam" id="3.90.550.10:FF:000011">
    <property type="entry name" value="3-deoxy-manno-octulosonate cytidylyltransferase"/>
    <property type="match status" value="1"/>
</dbReference>
<dbReference type="Gene3D" id="3.90.550.10">
    <property type="entry name" value="Spore Coat Polysaccharide Biosynthesis Protein SpsA, Chain A"/>
    <property type="match status" value="1"/>
</dbReference>
<dbReference type="HAMAP" id="MF_00057">
    <property type="entry name" value="KdsB"/>
    <property type="match status" value="1"/>
</dbReference>
<dbReference type="InterPro" id="IPR003329">
    <property type="entry name" value="Cytidylyl_trans"/>
</dbReference>
<dbReference type="InterPro" id="IPR004528">
    <property type="entry name" value="KdsB"/>
</dbReference>
<dbReference type="InterPro" id="IPR029044">
    <property type="entry name" value="Nucleotide-diphossugar_trans"/>
</dbReference>
<dbReference type="NCBIfam" id="TIGR00466">
    <property type="entry name" value="kdsB"/>
    <property type="match status" value="1"/>
</dbReference>
<dbReference type="NCBIfam" id="NF003950">
    <property type="entry name" value="PRK05450.1-3"/>
    <property type="match status" value="1"/>
</dbReference>
<dbReference type="NCBIfam" id="NF003952">
    <property type="entry name" value="PRK05450.1-5"/>
    <property type="match status" value="1"/>
</dbReference>
<dbReference type="NCBIfam" id="NF009905">
    <property type="entry name" value="PRK13368.1"/>
    <property type="match status" value="1"/>
</dbReference>
<dbReference type="PANTHER" id="PTHR42866">
    <property type="entry name" value="3-DEOXY-MANNO-OCTULOSONATE CYTIDYLYLTRANSFERASE"/>
    <property type="match status" value="1"/>
</dbReference>
<dbReference type="PANTHER" id="PTHR42866:SF2">
    <property type="entry name" value="3-DEOXY-MANNO-OCTULOSONATE CYTIDYLYLTRANSFERASE, MITOCHONDRIAL"/>
    <property type="match status" value="1"/>
</dbReference>
<dbReference type="Pfam" id="PF02348">
    <property type="entry name" value="CTP_transf_3"/>
    <property type="match status" value="1"/>
</dbReference>
<dbReference type="SUPFAM" id="SSF53448">
    <property type="entry name" value="Nucleotide-diphospho-sugar transferases"/>
    <property type="match status" value="1"/>
</dbReference>
<protein>
    <recommendedName>
        <fullName evidence="2">3-deoxy-manno-octulosonate cytidylyltransferase</fullName>
        <ecNumber evidence="2">2.7.7.38</ecNumber>
    </recommendedName>
    <alternativeName>
        <fullName evidence="2">CMP-2-keto-3-deoxyoctulosonic acid synthase</fullName>
        <shortName evidence="2">CKS</shortName>
        <shortName evidence="2">CMP-KDO synthase</shortName>
    </alternativeName>
</protein>
<organism>
    <name type="scientific">Haemophilus influenzae (strain ATCC 51907 / DSM 11121 / KW20 / Rd)</name>
    <dbReference type="NCBI Taxonomy" id="71421"/>
    <lineage>
        <taxon>Bacteria</taxon>
        <taxon>Pseudomonadati</taxon>
        <taxon>Pseudomonadota</taxon>
        <taxon>Gammaproteobacteria</taxon>
        <taxon>Pasteurellales</taxon>
        <taxon>Pasteurellaceae</taxon>
        <taxon>Haemophilus</taxon>
    </lineage>
</organism>
<sequence>MSFTVIIPARFASSRLPGKPLADIKGKPMIQHVFEKALQSGASRVIIATDNENVADVAKSFGAEVCMTSVNHNSGTERLAEVVEKLAIPDNEIIVNIQGDEPLIPPVIVRQVADNLAKFNVNMASLAVKIHDAEELFNPNAVKVLTDKDGYVLYFSRSVIPYDRDQFMNLQDVQKVQLSDAYLRHIGIYAYRAGFIKQYVQWAPTQLENLEKLEQLRVLYNGERIHVELAKEVPAVGVDTAEDLEKVRAILAAN</sequence>
<reference key="1">
    <citation type="journal article" date="1995" name="Science">
        <title>Whole-genome random sequencing and assembly of Haemophilus influenzae Rd.</title>
        <authorList>
            <person name="Fleischmann R.D."/>
            <person name="Adams M.D."/>
            <person name="White O."/>
            <person name="Clayton R.A."/>
            <person name="Kirkness E.F."/>
            <person name="Kerlavage A.R."/>
            <person name="Bult C.J."/>
            <person name="Tomb J.-F."/>
            <person name="Dougherty B.A."/>
            <person name="Merrick J.M."/>
            <person name="McKenney K."/>
            <person name="Sutton G.G."/>
            <person name="FitzHugh W."/>
            <person name="Fields C.A."/>
            <person name="Gocayne J.D."/>
            <person name="Scott J.D."/>
            <person name="Shirley R."/>
            <person name="Liu L.-I."/>
            <person name="Glodek A."/>
            <person name="Kelley J.M."/>
            <person name="Weidman J.F."/>
            <person name="Phillips C.A."/>
            <person name="Spriggs T."/>
            <person name="Hedblom E."/>
            <person name="Cotton M.D."/>
            <person name="Utterback T.R."/>
            <person name="Hanna M.C."/>
            <person name="Nguyen D.T."/>
            <person name="Saudek D.M."/>
            <person name="Brandon R.C."/>
            <person name="Fine L.D."/>
            <person name="Fritchman J.L."/>
            <person name="Fuhrmann J.L."/>
            <person name="Geoghagen N.S.M."/>
            <person name="Gnehm C.L."/>
            <person name="McDonald L.A."/>
            <person name="Small K.V."/>
            <person name="Fraser C.M."/>
            <person name="Smith H.O."/>
            <person name="Venter J.C."/>
        </authorList>
    </citation>
    <scope>NUCLEOTIDE SEQUENCE [LARGE SCALE GENOMIC DNA]</scope>
    <source>
        <strain>ATCC 51907 / DSM 11121 / KW20 / Rd</strain>
    </source>
</reference>
<accession>P44490</accession>
<feature type="initiator methionine" description="Removed" evidence="1">
    <location>
        <position position="1"/>
    </location>
</feature>
<feature type="chain" id="PRO_0000188506" description="3-deoxy-manno-octulosonate cytidylyltransferase">
    <location>
        <begin position="2"/>
        <end position="254"/>
    </location>
</feature>
<feature type="strand" evidence="4">
    <location>
        <begin position="4"/>
        <end position="8"/>
    </location>
</feature>
<feature type="strand" evidence="4">
    <location>
        <begin position="14"/>
        <end position="16"/>
    </location>
</feature>
<feature type="helix" evidence="4">
    <location>
        <begin position="19"/>
        <end position="21"/>
    </location>
</feature>
<feature type="strand" evidence="3">
    <location>
        <begin position="25"/>
        <end position="27"/>
    </location>
</feature>
<feature type="helix" evidence="4">
    <location>
        <begin position="29"/>
        <end position="39"/>
    </location>
</feature>
<feature type="strand" evidence="4">
    <location>
        <begin position="43"/>
        <end position="50"/>
    </location>
</feature>
<feature type="helix" evidence="4">
    <location>
        <begin position="52"/>
        <end position="60"/>
    </location>
</feature>
<feature type="strand" evidence="4">
    <location>
        <begin position="64"/>
        <end position="67"/>
    </location>
</feature>
<feature type="helix" evidence="4">
    <location>
        <begin position="75"/>
        <end position="85"/>
    </location>
</feature>
<feature type="strand" evidence="4">
    <location>
        <begin position="93"/>
        <end position="96"/>
    </location>
</feature>
<feature type="helix" evidence="4">
    <location>
        <begin position="106"/>
        <end position="119"/>
    </location>
</feature>
<feature type="strand" evidence="4">
    <location>
        <begin position="122"/>
        <end position="129"/>
    </location>
</feature>
<feature type="helix" evidence="4">
    <location>
        <begin position="133"/>
        <end position="136"/>
    </location>
</feature>
<feature type="strand" evidence="4">
    <location>
        <begin position="143"/>
        <end position="146"/>
    </location>
</feature>
<feature type="strand" evidence="4">
    <location>
        <begin position="150"/>
        <end position="158"/>
    </location>
</feature>
<feature type="helix" evidence="4">
    <location>
        <begin position="164"/>
        <end position="167"/>
    </location>
</feature>
<feature type="helix" evidence="4">
    <location>
        <begin position="173"/>
        <end position="175"/>
    </location>
</feature>
<feature type="strand" evidence="4">
    <location>
        <begin position="183"/>
        <end position="192"/>
    </location>
</feature>
<feature type="helix" evidence="4">
    <location>
        <begin position="193"/>
        <end position="201"/>
    </location>
</feature>
<feature type="helix" evidence="4">
    <location>
        <begin position="206"/>
        <end position="211"/>
    </location>
</feature>
<feature type="helix" evidence="4">
    <location>
        <begin position="216"/>
        <end position="220"/>
    </location>
</feature>
<feature type="strand" evidence="4">
    <location>
        <begin position="225"/>
        <end position="229"/>
    </location>
</feature>
<feature type="helix" evidence="4">
    <location>
        <begin position="241"/>
        <end position="253"/>
    </location>
</feature>
<keyword id="KW-0002">3D-structure</keyword>
<keyword id="KW-0963">Cytoplasm</keyword>
<keyword id="KW-0448">Lipopolysaccharide biosynthesis</keyword>
<keyword id="KW-0548">Nucleotidyltransferase</keyword>
<keyword id="KW-1185">Reference proteome</keyword>
<keyword id="KW-0808">Transferase</keyword>
<name>KDSB_HAEIN</name>
<gene>
    <name evidence="2" type="primary">kdsB</name>
    <name type="ordered locus">HI_0058</name>
</gene>